<keyword id="KW-0004">4Fe-4S</keyword>
<keyword id="KW-0963">Cytoplasm</keyword>
<keyword id="KW-0408">Iron</keyword>
<keyword id="KW-0411">Iron-sulfur</keyword>
<keyword id="KW-0479">Metal-binding</keyword>
<keyword id="KW-1185">Reference proteome</keyword>
<keyword id="KW-0949">S-adenosyl-L-methionine</keyword>
<keyword id="KW-0808">Transferase</keyword>
<name>LIPA_BUCAI</name>
<accession>P57357</accession>
<feature type="chain" id="PRO_0000102297" description="Lipoyl synthase">
    <location>
        <begin position="1"/>
        <end position="323"/>
    </location>
</feature>
<feature type="domain" description="Radical SAM core" evidence="2">
    <location>
        <begin position="77"/>
        <end position="293"/>
    </location>
</feature>
<feature type="binding site" evidence="1">
    <location>
        <position position="65"/>
    </location>
    <ligand>
        <name>[4Fe-4S] cluster</name>
        <dbReference type="ChEBI" id="CHEBI:49883"/>
        <label>1</label>
    </ligand>
</feature>
<feature type="binding site" evidence="1">
    <location>
        <position position="70"/>
    </location>
    <ligand>
        <name>[4Fe-4S] cluster</name>
        <dbReference type="ChEBI" id="CHEBI:49883"/>
        <label>1</label>
    </ligand>
</feature>
<feature type="binding site" evidence="1">
    <location>
        <position position="76"/>
    </location>
    <ligand>
        <name>[4Fe-4S] cluster</name>
        <dbReference type="ChEBI" id="CHEBI:49883"/>
        <label>1</label>
    </ligand>
</feature>
<feature type="binding site" evidence="1">
    <location>
        <position position="91"/>
    </location>
    <ligand>
        <name>[4Fe-4S] cluster</name>
        <dbReference type="ChEBI" id="CHEBI:49883"/>
        <label>2</label>
        <note>4Fe-4S-S-AdoMet</note>
    </ligand>
</feature>
<feature type="binding site" evidence="1">
    <location>
        <position position="95"/>
    </location>
    <ligand>
        <name>[4Fe-4S] cluster</name>
        <dbReference type="ChEBI" id="CHEBI:49883"/>
        <label>2</label>
        <note>4Fe-4S-S-AdoMet</note>
    </ligand>
</feature>
<feature type="binding site" evidence="1">
    <location>
        <position position="98"/>
    </location>
    <ligand>
        <name>[4Fe-4S] cluster</name>
        <dbReference type="ChEBI" id="CHEBI:49883"/>
        <label>2</label>
        <note>4Fe-4S-S-AdoMet</note>
    </ligand>
</feature>
<feature type="binding site" evidence="1">
    <location>
        <position position="304"/>
    </location>
    <ligand>
        <name>[4Fe-4S] cluster</name>
        <dbReference type="ChEBI" id="CHEBI:49883"/>
        <label>1</label>
    </ligand>
</feature>
<reference key="1">
    <citation type="journal article" date="2000" name="Nature">
        <title>Genome sequence of the endocellular bacterial symbiont of aphids Buchnera sp. APS.</title>
        <authorList>
            <person name="Shigenobu S."/>
            <person name="Watanabe H."/>
            <person name="Hattori M."/>
            <person name="Sakaki Y."/>
            <person name="Ishikawa H."/>
        </authorList>
    </citation>
    <scope>NUCLEOTIDE SEQUENCE [LARGE SCALE GENOMIC DNA]</scope>
    <source>
        <strain>APS</strain>
    </source>
</reference>
<proteinExistence type="inferred from homology"/>
<gene>
    <name evidence="1" type="primary">lipA</name>
    <name type="ordered locus">BU269</name>
</gene>
<protein>
    <recommendedName>
        <fullName evidence="1">Lipoyl synthase</fullName>
        <ecNumber evidence="1">2.8.1.8</ecNumber>
    </recommendedName>
    <alternativeName>
        <fullName evidence="1">Lip-syn</fullName>
        <shortName evidence="1">LS</shortName>
    </alternativeName>
    <alternativeName>
        <fullName evidence="1">Lipoate synthase</fullName>
    </alternativeName>
    <alternativeName>
        <fullName evidence="1">Lipoic acid synthase</fullName>
    </alternativeName>
    <alternativeName>
        <fullName evidence="1">Sulfur insertion protein LipA</fullName>
    </alternativeName>
</protein>
<sequence>MKKNKDVLLKNKILKKLNIINIKNLDNIKEKLKKPDWIKIKIPVNTSRIYQIKNALRKNNLYSVCEEAHCPNLSECFNNGTATFMILGSICTRNCPFCAVFHGRPNPVNVEEPQKLSDTIFDMGINYVVITSVVRDDLYDGGAEHFVNCIKAIKNKNQVKIEILVPDFRGRIELILNIFNKALPDIFNHNIENVPRLFKKIRPGANYQRSLLLLESFKKKYCSVLTKSGLMLGLGEKDVEIIQVMKDLYSSGVTLLTVGQYLQPSIHHLPVKRYIPLSEFENIKKEALSIGFTNAFCGPFIRSSYHASFQSHLPIKNNDINNI</sequence>
<evidence type="ECO:0000255" key="1">
    <source>
        <dbReference type="HAMAP-Rule" id="MF_00206"/>
    </source>
</evidence>
<evidence type="ECO:0000255" key="2">
    <source>
        <dbReference type="PROSITE-ProRule" id="PRU01266"/>
    </source>
</evidence>
<dbReference type="EC" id="2.8.1.8" evidence="1"/>
<dbReference type="EMBL" id="BA000003">
    <property type="protein sequence ID" value="BAB12979.1"/>
    <property type="molecule type" value="Genomic_DNA"/>
</dbReference>
<dbReference type="RefSeq" id="NP_240093.1">
    <property type="nucleotide sequence ID" value="NC_002528.1"/>
</dbReference>
<dbReference type="RefSeq" id="WP_010896036.1">
    <property type="nucleotide sequence ID" value="NC_002528.1"/>
</dbReference>
<dbReference type="SMR" id="P57357"/>
<dbReference type="STRING" id="563178.BUAP5A_264"/>
<dbReference type="EnsemblBacteria" id="BAB12979">
    <property type="protein sequence ID" value="BAB12979"/>
    <property type="gene ID" value="BAB12979"/>
</dbReference>
<dbReference type="KEGG" id="buc:BU269"/>
<dbReference type="PATRIC" id="fig|107806.10.peg.279"/>
<dbReference type="eggNOG" id="COG0320">
    <property type="taxonomic scope" value="Bacteria"/>
</dbReference>
<dbReference type="HOGENOM" id="CLU_033144_2_1_6"/>
<dbReference type="UniPathway" id="UPA00538">
    <property type="reaction ID" value="UER00593"/>
</dbReference>
<dbReference type="Proteomes" id="UP000001806">
    <property type="component" value="Chromosome"/>
</dbReference>
<dbReference type="GO" id="GO:0005737">
    <property type="term" value="C:cytoplasm"/>
    <property type="evidence" value="ECO:0007669"/>
    <property type="project" value="UniProtKB-SubCell"/>
</dbReference>
<dbReference type="GO" id="GO:0051539">
    <property type="term" value="F:4 iron, 4 sulfur cluster binding"/>
    <property type="evidence" value="ECO:0007669"/>
    <property type="project" value="UniProtKB-UniRule"/>
</dbReference>
<dbReference type="GO" id="GO:0016992">
    <property type="term" value="F:lipoate synthase activity"/>
    <property type="evidence" value="ECO:0007669"/>
    <property type="project" value="UniProtKB-UniRule"/>
</dbReference>
<dbReference type="GO" id="GO:0046872">
    <property type="term" value="F:metal ion binding"/>
    <property type="evidence" value="ECO:0007669"/>
    <property type="project" value="UniProtKB-KW"/>
</dbReference>
<dbReference type="FunFam" id="3.20.20.70:FF:000040">
    <property type="entry name" value="Lipoyl synthase"/>
    <property type="match status" value="1"/>
</dbReference>
<dbReference type="Gene3D" id="3.20.20.70">
    <property type="entry name" value="Aldolase class I"/>
    <property type="match status" value="1"/>
</dbReference>
<dbReference type="HAMAP" id="MF_00206">
    <property type="entry name" value="Lipoyl_synth"/>
    <property type="match status" value="1"/>
</dbReference>
<dbReference type="InterPro" id="IPR013785">
    <property type="entry name" value="Aldolase_TIM"/>
</dbReference>
<dbReference type="InterPro" id="IPR006638">
    <property type="entry name" value="Elp3/MiaA/NifB-like_rSAM"/>
</dbReference>
<dbReference type="InterPro" id="IPR031691">
    <property type="entry name" value="LIAS_N"/>
</dbReference>
<dbReference type="InterPro" id="IPR003698">
    <property type="entry name" value="Lipoyl_synth"/>
</dbReference>
<dbReference type="InterPro" id="IPR007197">
    <property type="entry name" value="rSAM"/>
</dbReference>
<dbReference type="NCBIfam" id="TIGR00510">
    <property type="entry name" value="lipA"/>
    <property type="match status" value="1"/>
</dbReference>
<dbReference type="NCBIfam" id="NF004019">
    <property type="entry name" value="PRK05481.1"/>
    <property type="match status" value="1"/>
</dbReference>
<dbReference type="NCBIfam" id="NF009544">
    <property type="entry name" value="PRK12928.1"/>
    <property type="match status" value="1"/>
</dbReference>
<dbReference type="PANTHER" id="PTHR10949">
    <property type="entry name" value="LIPOYL SYNTHASE"/>
    <property type="match status" value="1"/>
</dbReference>
<dbReference type="PANTHER" id="PTHR10949:SF0">
    <property type="entry name" value="LIPOYL SYNTHASE, MITOCHONDRIAL"/>
    <property type="match status" value="1"/>
</dbReference>
<dbReference type="Pfam" id="PF16881">
    <property type="entry name" value="LIAS_N"/>
    <property type="match status" value="1"/>
</dbReference>
<dbReference type="Pfam" id="PF04055">
    <property type="entry name" value="Radical_SAM"/>
    <property type="match status" value="1"/>
</dbReference>
<dbReference type="PIRSF" id="PIRSF005963">
    <property type="entry name" value="Lipoyl_synth"/>
    <property type="match status" value="1"/>
</dbReference>
<dbReference type="SFLD" id="SFLDF00271">
    <property type="entry name" value="lipoyl_synthase"/>
    <property type="match status" value="1"/>
</dbReference>
<dbReference type="SFLD" id="SFLDG01058">
    <property type="entry name" value="lipoyl_synthase_like"/>
    <property type="match status" value="1"/>
</dbReference>
<dbReference type="SMART" id="SM00729">
    <property type="entry name" value="Elp3"/>
    <property type="match status" value="1"/>
</dbReference>
<dbReference type="SUPFAM" id="SSF102114">
    <property type="entry name" value="Radical SAM enzymes"/>
    <property type="match status" value="1"/>
</dbReference>
<dbReference type="PROSITE" id="PS51918">
    <property type="entry name" value="RADICAL_SAM"/>
    <property type="match status" value="1"/>
</dbReference>
<organism>
    <name type="scientific">Buchnera aphidicola subsp. Acyrthosiphon pisum (strain APS)</name>
    <name type="common">Acyrthosiphon pisum symbiotic bacterium</name>
    <dbReference type="NCBI Taxonomy" id="107806"/>
    <lineage>
        <taxon>Bacteria</taxon>
        <taxon>Pseudomonadati</taxon>
        <taxon>Pseudomonadota</taxon>
        <taxon>Gammaproteobacteria</taxon>
        <taxon>Enterobacterales</taxon>
        <taxon>Erwiniaceae</taxon>
        <taxon>Buchnera</taxon>
    </lineage>
</organism>
<comment type="function">
    <text evidence="1">Catalyzes the radical-mediated insertion of two sulfur atoms into the C-6 and C-8 positions of the octanoyl moiety bound to the lipoyl domains of lipoate-dependent enzymes, thereby converting the octanoylated domains into lipoylated derivatives.</text>
</comment>
<comment type="catalytic activity">
    <reaction evidence="1">
        <text>[[Fe-S] cluster scaffold protein carrying a second [4Fe-4S](2+) cluster] + N(6)-octanoyl-L-lysyl-[protein] + 2 oxidized [2Fe-2S]-[ferredoxin] + 2 S-adenosyl-L-methionine + 4 H(+) = [[Fe-S] cluster scaffold protein] + N(6)-[(R)-dihydrolipoyl]-L-lysyl-[protein] + 4 Fe(3+) + 2 hydrogen sulfide + 2 5'-deoxyadenosine + 2 L-methionine + 2 reduced [2Fe-2S]-[ferredoxin]</text>
        <dbReference type="Rhea" id="RHEA:16585"/>
        <dbReference type="Rhea" id="RHEA-COMP:9928"/>
        <dbReference type="Rhea" id="RHEA-COMP:10000"/>
        <dbReference type="Rhea" id="RHEA-COMP:10001"/>
        <dbReference type="Rhea" id="RHEA-COMP:10475"/>
        <dbReference type="Rhea" id="RHEA-COMP:14568"/>
        <dbReference type="Rhea" id="RHEA-COMP:14569"/>
        <dbReference type="ChEBI" id="CHEBI:15378"/>
        <dbReference type="ChEBI" id="CHEBI:17319"/>
        <dbReference type="ChEBI" id="CHEBI:29034"/>
        <dbReference type="ChEBI" id="CHEBI:29919"/>
        <dbReference type="ChEBI" id="CHEBI:33722"/>
        <dbReference type="ChEBI" id="CHEBI:33737"/>
        <dbReference type="ChEBI" id="CHEBI:33738"/>
        <dbReference type="ChEBI" id="CHEBI:57844"/>
        <dbReference type="ChEBI" id="CHEBI:59789"/>
        <dbReference type="ChEBI" id="CHEBI:78809"/>
        <dbReference type="ChEBI" id="CHEBI:83100"/>
        <dbReference type="EC" id="2.8.1.8"/>
    </reaction>
</comment>
<comment type="cofactor">
    <cofactor evidence="1">
        <name>[4Fe-4S] cluster</name>
        <dbReference type="ChEBI" id="CHEBI:49883"/>
    </cofactor>
    <text evidence="1">Binds 2 [4Fe-4S] clusters per subunit. One cluster is coordinated with 3 cysteines and an exchangeable S-adenosyl-L-methionine.</text>
</comment>
<comment type="pathway">
    <text evidence="1">Protein modification; protein lipoylation via endogenous pathway; protein N(6)-(lipoyl)lysine from octanoyl-[acyl-carrier-protein]: step 2/2.</text>
</comment>
<comment type="subcellular location">
    <subcellularLocation>
        <location evidence="1">Cytoplasm</location>
    </subcellularLocation>
</comment>
<comment type="similarity">
    <text evidence="1">Belongs to the radical SAM superfamily. Lipoyl synthase family.</text>
</comment>